<reference key="1">
    <citation type="submission" date="2006-03" db="EMBL/GenBank/DDBJ databases">
        <title>Complete sequence of Methylobacillus flagellatus KT.</title>
        <authorList>
            <consortium name="US DOE Joint Genome Institute"/>
            <person name="Copeland A."/>
            <person name="Lucas S."/>
            <person name="Lapidus A."/>
            <person name="Barry K."/>
            <person name="Detter J.C."/>
            <person name="Glavina del Rio T."/>
            <person name="Hammon N."/>
            <person name="Israni S."/>
            <person name="Dalin E."/>
            <person name="Tice H."/>
            <person name="Pitluck S."/>
            <person name="Brettin T."/>
            <person name="Bruce D."/>
            <person name="Han C."/>
            <person name="Tapia R."/>
            <person name="Saunders E."/>
            <person name="Gilna P."/>
            <person name="Schmutz J."/>
            <person name="Larimer F."/>
            <person name="Land M."/>
            <person name="Kyrpides N."/>
            <person name="Anderson I."/>
            <person name="Richardson P."/>
        </authorList>
    </citation>
    <scope>NUCLEOTIDE SEQUENCE [LARGE SCALE GENOMIC DNA]</scope>
    <source>
        <strain>ATCC 51484 / DSM 6875 / VKM B-1610 / KT</strain>
    </source>
</reference>
<gene>
    <name evidence="1" type="primary">miaA</name>
    <name type="ordered locus">Mfla_1385</name>
</gene>
<name>MIAA_METFK</name>
<proteinExistence type="inferred from homology"/>
<protein>
    <recommendedName>
        <fullName evidence="1">tRNA dimethylallyltransferase</fullName>
        <ecNumber evidence="1">2.5.1.75</ecNumber>
    </recommendedName>
    <alternativeName>
        <fullName evidence="1">Dimethylallyl diphosphate:tRNA dimethylallyltransferase</fullName>
        <shortName evidence="1">DMAPP:tRNA dimethylallyltransferase</shortName>
        <shortName evidence="1">DMATase</shortName>
    </alternativeName>
    <alternativeName>
        <fullName evidence="1">Isopentenyl-diphosphate:tRNA isopentenyltransferase</fullName>
        <shortName evidence="1">IPP transferase</shortName>
        <shortName evidence="1">IPPT</shortName>
        <shortName evidence="1">IPTase</shortName>
    </alternativeName>
</protein>
<feature type="chain" id="PRO_0000377219" description="tRNA dimethylallyltransferase">
    <location>
        <begin position="1"/>
        <end position="315"/>
    </location>
</feature>
<feature type="region of interest" description="Interaction with substrate tRNA" evidence="1">
    <location>
        <begin position="38"/>
        <end position="41"/>
    </location>
</feature>
<feature type="region of interest" description="Interaction with substrate tRNA" evidence="1">
    <location>
        <begin position="162"/>
        <end position="166"/>
    </location>
</feature>
<feature type="region of interest" description="Interaction with substrate tRNA" evidence="1">
    <location>
        <begin position="245"/>
        <end position="250"/>
    </location>
</feature>
<feature type="binding site" evidence="1">
    <location>
        <begin position="13"/>
        <end position="20"/>
    </location>
    <ligand>
        <name>ATP</name>
        <dbReference type="ChEBI" id="CHEBI:30616"/>
    </ligand>
</feature>
<feature type="binding site" evidence="1">
    <location>
        <begin position="15"/>
        <end position="20"/>
    </location>
    <ligand>
        <name>substrate</name>
    </ligand>
</feature>
<feature type="site" description="Interaction with substrate tRNA" evidence="1">
    <location>
        <position position="104"/>
    </location>
</feature>
<feature type="site" description="Interaction with substrate tRNA" evidence="1">
    <location>
        <position position="126"/>
    </location>
</feature>
<accession>Q1H1I4</accession>
<keyword id="KW-0067">ATP-binding</keyword>
<keyword id="KW-0460">Magnesium</keyword>
<keyword id="KW-0547">Nucleotide-binding</keyword>
<keyword id="KW-1185">Reference proteome</keyword>
<keyword id="KW-0808">Transferase</keyword>
<keyword id="KW-0819">tRNA processing</keyword>
<evidence type="ECO:0000255" key="1">
    <source>
        <dbReference type="HAMAP-Rule" id="MF_00185"/>
    </source>
</evidence>
<sequence>MLISQPPAIFLMGPTASGKTGLAVELVQAMPLEIISVDSALVYQDMDIGTAKPGQEVLQRAPHHLIDVIDPMQVYSAAQFREDALRLMADITARGKAPLLVGGTMLYFRTLEQGLGGLPEADAQVRAELDREAAKIGWPGMHAKLAAIDPETAARLQPADSQRIQRALEVYRLTGKSMTALHRQQAAEILPYRLLKIALQPSDRSVLHARIAERFVAMMKGGLLEEVQGLLKKYPGLHPDMTSMRCVGYRQTLEYLAGNIDDEAWKAQGIAATRQLAKRQLTWLRGMDDTLVLDCLEQDVYGQAQRAISGFLSAV</sequence>
<organism>
    <name type="scientific">Methylobacillus flagellatus (strain ATCC 51484 / DSM 6875 / VKM B-1610 / KT)</name>
    <dbReference type="NCBI Taxonomy" id="265072"/>
    <lineage>
        <taxon>Bacteria</taxon>
        <taxon>Pseudomonadati</taxon>
        <taxon>Pseudomonadota</taxon>
        <taxon>Betaproteobacteria</taxon>
        <taxon>Nitrosomonadales</taxon>
        <taxon>Methylophilaceae</taxon>
        <taxon>Methylobacillus</taxon>
    </lineage>
</organism>
<dbReference type="EC" id="2.5.1.75" evidence="1"/>
<dbReference type="EMBL" id="CP000284">
    <property type="protein sequence ID" value="ABE49653.1"/>
    <property type="molecule type" value="Genomic_DNA"/>
</dbReference>
<dbReference type="RefSeq" id="WP_011479607.1">
    <property type="nucleotide sequence ID" value="NC_007947.1"/>
</dbReference>
<dbReference type="SMR" id="Q1H1I4"/>
<dbReference type="STRING" id="265072.Mfla_1385"/>
<dbReference type="KEGG" id="mfa:Mfla_1385"/>
<dbReference type="eggNOG" id="COG0324">
    <property type="taxonomic scope" value="Bacteria"/>
</dbReference>
<dbReference type="HOGENOM" id="CLU_032616_0_0_4"/>
<dbReference type="OrthoDB" id="9776390at2"/>
<dbReference type="Proteomes" id="UP000002440">
    <property type="component" value="Chromosome"/>
</dbReference>
<dbReference type="GO" id="GO:0005524">
    <property type="term" value="F:ATP binding"/>
    <property type="evidence" value="ECO:0007669"/>
    <property type="project" value="UniProtKB-UniRule"/>
</dbReference>
<dbReference type="GO" id="GO:0052381">
    <property type="term" value="F:tRNA dimethylallyltransferase activity"/>
    <property type="evidence" value="ECO:0007669"/>
    <property type="project" value="UniProtKB-UniRule"/>
</dbReference>
<dbReference type="GO" id="GO:0006400">
    <property type="term" value="P:tRNA modification"/>
    <property type="evidence" value="ECO:0007669"/>
    <property type="project" value="TreeGrafter"/>
</dbReference>
<dbReference type="FunFam" id="1.10.20.140:FF:000001">
    <property type="entry name" value="tRNA dimethylallyltransferase"/>
    <property type="match status" value="1"/>
</dbReference>
<dbReference type="Gene3D" id="1.10.20.140">
    <property type="match status" value="1"/>
</dbReference>
<dbReference type="Gene3D" id="3.40.50.300">
    <property type="entry name" value="P-loop containing nucleotide triphosphate hydrolases"/>
    <property type="match status" value="1"/>
</dbReference>
<dbReference type="HAMAP" id="MF_00185">
    <property type="entry name" value="IPP_trans"/>
    <property type="match status" value="1"/>
</dbReference>
<dbReference type="InterPro" id="IPR039657">
    <property type="entry name" value="Dimethylallyltransferase"/>
</dbReference>
<dbReference type="InterPro" id="IPR018022">
    <property type="entry name" value="IPT"/>
</dbReference>
<dbReference type="InterPro" id="IPR027417">
    <property type="entry name" value="P-loop_NTPase"/>
</dbReference>
<dbReference type="NCBIfam" id="TIGR00174">
    <property type="entry name" value="miaA"/>
    <property type="match status" value="1"/>
</dbReference>
<dbReference type="PANTHER" id="PTHR11088">
    <property type="entry name" value="TRNA DIMETHYLALLYLTRANSFERASE"/>
    <property type="match status" value="1"/>
</dbReference>
<dbReference type="PANTHER" id="PTHR11088:SF60">
    <property type="entry name" value="TRNA DIMETHYLALLYLTRANSFERASE"/>
    <property type="match status" value="1"/>
</dbReference>
<dbReference type="Pfam" id="PF01715">
    <property type="entry name" value="IPPT"/>
    <property type="match status" value="1"/>
</dbReference>
<dbReference type="SUPFAM" id="SSF52540">
    <property type="entry name" value="P-loop containing nucleoside triphosphate hydrolases"/>
    <property type="match status" value="2"/>
</dbReference>
<comment type="function">
    <text evidence="1">Catalyzes the transfer of a dimethylallyl group onto the adenine at position 37 in tRNAs that read codons beginning with uridine, leading to the formation of N6-(dimethylallyl)adenosine (i(6)A).</text>
</comment>
<comment type="catalytic activity">
    <reaction evidence="1">
        <text>adenosine(37) in tRNA + dimethylallyl diphosphate = N(6)-dimethylallyladenosine(37) in tRNA + diphosphate</text>
        <dbReference type="Rhea" id="RHEA:26482"/>
        <dbReference type="Rhea" id="RHEA-COMP:10162"/>
        <dbReference type="Rhea" id="RHEA-COMP:10375"/>
        <dbReference type="ChEBI" id="CHEBI:33019"/>
        <dbReference type="ChEBI" id="CHEBI:57623"/>
        <dbReference type="ChEBI" id="CHEBI:74411"/>
        <dbReference type="ChEBI" id="CHEBI:74415"/>
        <dbReference type="EC" id="2.5.1.75"/>
    </reaction>
</comment>
<comment type="cofactor">
    <cofactor evidence="1">
        <name>Mg(2+)</name>
        <dbReference type="ChEBI" id="CHEBI:18420"/>
    </cofactor>
</comment>
<comment type="subunit">
    <text evidence="1">Monomer.</text>
</comment>
<comment type="similarity">
    <text evidence="1">Belongs to the IPP transferase family.</text>
</comment>